<name>IF4A_LODEL</name>
<sequence length="397" mass="44543">MASEGITEIDSGLIESNYDNVVYKFDDLNLKPNIVRGIFGYGYETPSAIQQRAILPITEGRDVLAQAQSGTGKTATFTISALQRIDENEKSTQALILAPTRELALQIKNVITSIGLYLNVTVHASIGGTSMSDDIEAFKSGVQIVVGTPGRVFDMIERRYFRTDKVKMFILDEADEMLSSGFKEQIYNIFRLLPETTQVVLLSATMPQDVLEVTTKFMNNPVRILVKKDELTLEGIKQYFINVEVEDYKFDCLVDLYDSISVTQAVIFCNTRSKVEFLTNKLREQKFTVSAIHADLPQGERDTIMKEFRSGSSRILISTDLLARGIDVQQVSLVINYDLPANKENYIHRIGRGGRFGRKGVAINFVTDKDVGMMREIEKFYSTQITEMPADIGSLFA</sequence>
<organism>
    <name type="scientific">Lodderomyces elongisporus (strain ATCC 11503 / CBS 2605 / JCM 1781 / NBRC 1676 / NRRL YB-4239)</name>
    <name type="common">Yeast</name>
    <name type="synonym">Saccharomyces elongisporus</name>
    <dbReference type="NCBI Taxonomy" id="379508"/>
    <lineage>
        <taxon>Eukaryota</taxon>
        <taxon>Fungi</taxon>
        <taxon>Dikarya</taxon>
        <taxon>Ascomycota</taxon>
        <taxon>Saccharomycotina</taxon>
        <taxon>Pichiomycetes</taxon>
        <taxon>Debaryomycetaceae</taxon>
        <taxon>Candida/Lodderomyces clade</taxon>
        <taxon>Lodderomyces</taxon>
    </lineage>
</organism>
<reference key="1">
    <citation type="journal article" date="2009" name="Nature">
        <title>Evolution of pathogenicity and sexual reproduction in eight Candida genomes.</title>
        <authorList>
            <person name="Butler G."/>
            <person name="Rasmussen M.D."/>
            <person name="Lin M.F."/>
            <person name="Santos M.A.S."/>
            <person name="Sakthikumar S."/>
            <person name="Munro C.A."/>
            <person name="Rheinbay E."/>
            <person name="Grabherr M."/>
            <person name="Forche A."/>
            <person name="Reedy J.L."/>
            <person name="Agrafioti I."/>
            <person name="Arnaud M.B."/>
            <person name="Bates S."/>
            <person name="Brown A.J.P."/>
            <person name="Brunke S."/>
            <person name="Costanzo M.C."/>
            <person name="Fitzpatrick D.A."/>
            <person name="de Groot P.W.J."/>
            <person name="Harris D."/>
            <person name="Hoyer L.L."/>
            <person name="Hube B."/>
            <person name="Klis F.M."/>
            <person name="Kodira C."/>
            <person name="Lennard N."/>
            <person name="Logue M.E."/>
            <person name="Martin R."/>
            <person name="Neiman A.M."/>
            <person name="Nikolaou E."/>
            <person name="Quail M.A."/>
            <person name="Quinn J."/>
            <person name="Santos M.C."/>
            <person name="Schmitzberger F.F."/>
            <person name="Sherlock G."/>
            <person name="Shah P."/>
            <person name="Silverstein K.A.T."/>
            <person name="Skrzypek M.S."/>
            <person name="Soll D."/>
            <person name="Staggs R."/>
            <person name="Stansfield I."/>
            <person name="Stumpf M.P.H."/>
            <person name="Sudbery P.E."/>
            <person name="Srikantha T."/>
            <person name="Zeng Q."/>
            <person name="Berman J."/>
            <person name="Berriman M."/>
            <person name="Heitman J."/>
            <person name="Gow N.A.R."/>
            <person name="Lorenz M.C."/>
            <person name="Birren B.W."/>
            <person name="Kellis M."/>
            <person name="Cuomo C.A."/>
        </authorList>
    </citation>
    <scope>NUCLEOTIDE SEQUENCE [LARGE SCALE GENOMIC DNA]</scope>
    <source>
        <strain>ATCC 11503 / BCRC 21390 / CBS 2605 / JCM 1781 / NBRC 1676 / NRRL YB-4239</strain>
    </source>
</reference>
<keyword id="KW-0067">ATP-binding</keyword>
<keyword id="KW-0963">Cytoplasm</keyword>
<keyword id="KW-0347">Helicase</keyword>
<keyword id="KW-0378">Hydrolase</keyword>
<keyword id="KW-0396">Initiation factor</keyword>
<keyword id="KW-0547">Nucleotide-binding</keyword>
<keyword id="KW-0648">Protein biosynthesis</keyword>
<keyword id="KW-1185">Reference proteome</keyword>
<keyword id="KW-0694">RNA-binding</keyword>
<comment type="function">
    <text evidence="1">ATP-dependent RNA helicase which is a subunit of the eIF4F complex involved in cap recognition and is required for mRNA binding to ribosome. In the current model of translation initiation, eIF4A unwinds RNA secondary structures in the 5'-UTR of mRNAs which is necessary to allow efficient binding of the small ribosomal subunit, and subsequent scanning for the initiator codon (By similarity).</text>
</comment>
<comment type="catalytic activity">
    <reaction>
        <text>ATP + H2O = ADP + phosphate + H(+)</text>
        <dbReference type="Rhea" id="RHEA:13065"/>
        <dbReference type="ChEBI" id="CHEBI:15377"/>
        <dbReference type="ChEBI" id="CHEBI:15378"/>
        <dbReference type="ChEBI" id="CHEBI:30616"/>
        <dbReference type="ChEBI" id="CHEBI:43474"/>
        <dbReference type="ChEBI" id="CHEBI:456216"/>
        <dbReference type="EC" id="3.6.4.13"/>
    </reaction>
</comment>
<comment type="subunit">
    <text evidence="1">Component of the eIF4F complex, which composition varies with external and internal environmental conditions. It is composed of at least eIF4A, eIF4E and eIF4G (By similarity).</text>
</comment>
<comment type="subcellular location">
    <subcellularLocation>
        <location evidence="1">Cytoplasm</location>
    </subcellularLocation>
</comment>
<comment type="domain">
    <text>The Q motif is unique to and characteristic of the DEAD box family of RNA helicases and controls ATP binding and hydrolysis.</text>
</comment>
<comment type="similarity">
    <text evidence="4">Belongs to the DEAD box helicase family. eIF4A subfamily.</text>
</comment>
<dbReference type="EC" id="3.6.4.13"/>
<dbReference type="EMBL" id="CH981525">
    <property type="protein sequence ID" value="EDK43231.1"/>
    <property type="molecule type" value="Genomic_DNA"/>
</dbReference>
<dbReference type="RefSeq" id="XP_001526581.1">
    <property type="nucleotide sequence ID" value="XM_001526531.1"/>
</dbReference>
<dbReference type="SMR" id="A5DVM3"/>
<dbReference type="FunCoup" id="A5DVM3">
    <property type="interactions" value="1239"/>
</dbReference>
<dbReference type="STRING" id="379508.A5DVM3"/>
<dbReference type="VEuPathDB" id="FungiDB:LELG_01409"/>
<dbReference type="eggNOG" id="KOG0327">
    <property type="taxonomic scope" value="Eukaryota"/>
</dbReference>
<dbReference type="HOGENOM" id="CLU_003041_1_0_1"/>
<dbReference type="InParanoid" id="A5DVM3"/>
<dbReference type="OMA" id="FGCQALV"/>
<dbReference type="OrthoDB" id="10265785at2759"/>
<dbReference type="Proteomes" id="UP000001996">
    <property type="component" value="Unassembled WGS sequence"/>
</dbReference>
<dbReference type="GO" id="GO:0005737">
    <property type="term" value="C:cytoplasm"/>
    <property type="evidence" value="ECO:0007669"/>
    <property type="project" value="UniProtKB-SubCell"/>
</dbReference>
<dbReference type="GO" id="GO:0005524">
    <property type="term" value="F:ATP binding"/>
    <property type="evidence" value="ECO:0007669"/>
    <property type="project" value="UniProtKB-KW"/>
</dbReference>
<dbReference type="GO" id="GO:0016887">
    <property type="term" value="F:ATP hydrolysis activity"/>
    <property type="evidence" value="ECO:0007669"/>
    <property type="project" value="RHEA"/>
</dbReference>
<dbReference type="GO" id="GO:0003723">
    <property type="term" value="F:RNA binding"/>
    <property type="evidence" value="ECO:0007669"/>
    <property type="project" value="UniProtKB-KW"/>
</dbReference>
<dbReference type="GO" id="GO:0003724">
    <property type="term" value="F:RNA helicase activity"/>
    <property type="evidence" value="ECO:0007669"/>
    <property type="project" value="UniProtKB-EC"/>
</dbReference>
<dbReference type="GO" id="GO:0003743">
    <property type="term" value="F:translation initiation factor activity"/>
    <property type="evidence" value="ECO:0007669"/>
    <property type="project" value="UniProtKB-KW"/>
</dbReference>
<dbReference type="CDD" id="cd18787">
    <property type="entry name" value="SF2_C_DEAD"/>
    <property type="match status" value="1"/>
</dbReference>
<dbReference type="FunFam" id="3.40.50.300:FF:000089">
    <property type="entry name" value="Eukaryotic initiation factor 4A-II"/>
    <property type="match status" value="1"/>
</dbReference>
<dbReference type="FunFam" id="3.40.50.300:FF:000031">
    <property type="entry name" value="Eukaryotic initiation factor 4A-III"/>
    <property type="match status" value="1"/>
</dbReference>
<dbReference type="Gene3D" id="3.40.50.300">
    <property type="entry name" value="P-loop containing nucleotide triphosphate hydrolases"/>
    <property type="match status" value="2"/>
</dbReference>
<dbReference type="InterPro" id="IPR011545">
    <property type="entry name" value="DEAD/DEAH_box_helicase_dom"/>
</dbReference>
<dbReference type="InterPro" id="IPR014001">
    <property type="entry name" value="Helicase_ATP-bd"/>
</dbReference>
<dbReference type="InterPro" id="IPR001650">
    <property type="entry name" value="Helicase_C-like"/>
</dbReference>
<dbReference type="InterPro" id="IPR027417">
    <property type="entry name" value="P-loop_NTPase"/>
</dbReference>
<dbReference type="InterPro" id="IPR000629">
    <property type="entry name" value="RNA-helicase_DEAD-box_CS"/>
</dbReference>
<dbReference type="InterPro" id="IPR014014">
    <property type="entry name" value="RNA_helicase_DEAD_Q_motif"/>
</dbReference>
<dbReference type="PANTHER" id="PTHR47958">
    <property type="entry name" value="ATP-DEPENDENT RNA HELICASE DBP3"/>
    <property type="match status" value="1"/>
</dbReference>
<dbReference type="Pfam" id="PF00270">
    <property type="entry name" value="DEAD"/>
    <property type="match status" value="1"/>
</dbReference>
<dbReference type="Pfam" id="PF00271">
    <property type="entry name" value="Helicase_C"/>
    <property type="match status" value="1"/>
</dbReference>
<dbReference type="SMART" id="SM00487">
    <property type="entry name" value="DEXDc"/>
    <property type="match status" value="1"/>
</dbReference>
<dbReference type="SMART" id="SM00490">
    <property type="entry name" value="HELICc"/>
    <property type="match status" value="1"/>
</dbReference>
<dbReference type="SUPFAM" id="SSF52540">
    <property type="entry name" value="P-loop containing nucleoside triphosphate hydrolases"/>
    <property type="match status" value="2"/>
</dbReference>
<dbReference type="PROSITE" id="PS00039">
    <property type="entry name" value="DEAD_ATP_HELICASE"/>
    <property type="match status" value="1"/>
</dbReference>
<dbReference type="PROSITE" id="PS51192">
    <property type="entry name" value="HELICASE_ATP_BIND_1"/>
    <property type="match status" value="1"/>
</dbReference>
<dbReference type="PROSITE" id="PS51194">
    <property type="entry name" value="HELICASE_CTER"/>
    <property type="match status" value="1"/>
</dbReference>
<dbReference type="PROSITE" id="PS51195">
    <property type="entry name" value="Q_MOTIF"/>
    <property type="match status" value="1"/>
</dbReference>
<feature type="chain" id="PRO_0000294604" description="ATP-dependent RNA helicase eIF4A">
    <location>
        <begin position="1"/>
        <end position="397"/>
    </location>
</feature>
<feature type="domain" description="Helicase ATP-binding" evidence="2">
    <location>
        <begin position="54"/>
        <end position="224"/>
    </location>
</feature>
<feature type="domain" description="Helicase C-terminal" evidence="3">
    <location>
        <begin position="255"/>
        <end position="396"/>
    </location>
</feature>
<feature type="short sequence motif" description="Q motif">
    <location>
        <begin position="23"/>
        <end position="51"/>
    </location>
</feature>
<feature type="short sequence motif" description="DEAD box">
    <location>
        <begin position="172"/>
        <end position="175"/>
    </location>
</feature>
<feature type="binding site" evidence="2">
    <location>
        <begin position="67"/>
        <end position="74"/>
    </location>
    <ligand>
        <name>ATP</name>
        <dbReference type="ChEBI" id="CHEBI:30616"/>
    </ligand>
</feature>
<evidence type="ECO:0000250" key="1"/>
<evidence type="ECO:0000255" key="2">
    <source>
        <dbReference type="PROSITE-ProRule" id="PRU00541"/>
    </source>
</evidence>
<evidence type="ECO:0000255" key="3">
    <source>
        <dbReference type="PROSITE-ProRule" id="PRU00542"/>
    </source>
</evidence>
<evidence type="ECO:0000305" key="4"/>
<proteinExistence type="inferred from homology"/>
<protein>
    <recommendedName>
        <fullName>ATP-dependent RNA helicase eIF4A</fullName>
        <ecNumber>3.6.4.13</ecNumber>
    </recommendedName>
    <alternativeName>
        <fullName>Eukaryotic initiation factor 4A</fullName>
        <shortName>eIF-4A</shortName>
    </alternativeName>
    <alternativeName>
        <fullName>Translation initiation factor 1</fullName>
    </alternativeName>
</protein>
<accession>A5DVM3</accession>
<gene>
    <name type="primary">TIF1</name>
    <name type="synonym">TIF41</name>
    <name type="ORF">LELG_01409</name>
</gene>